<evidence type="ECO:0000250" key="1">
    <source>
        <dbReference type="UniProtKB" id="P27945"/>
    </source>
</evidence>
<evidence type="ECO:0000255" key="2"/>
<evidence type="ECO:0000305" key="3"/>
<organismHost>
    <name type="scientific">Ornithodoros</name>
    <name type="common">relapsing fever ticks</name>
    <dbReference type="NCBI Taxonomy" id="6937"/>
</organismHost>
<organismHost>
    <name type="scientific">Phacochoerus aethiopicus</name>
    <name type="common">Warthog</name>
    <dbReference type="NCBI Taxonomy" id="85517"/>
</organismHost>
<organismHost>
    <name type="scientific">Phacochoerus africanus</name>
    <name type="common">Warthog</name>
    <dbReference type="NCBI Taxonomy" id="41426"/>
</organismHost>
<organismHost>
    <name type="scientific">Potamochoerus larvatus</name>
    <name type="common">Bushpig</name>
    <dbReference type="NCBI Taxonomy" id="273792"/>
</organismHost>
<organismHost>
    <name type="scientific">Sus scrofa</name>
    <name type="common">Pig</name>
    <dbReference type="NCBI Taxonomy" id="9823"/>
</organismHost>
<keyword id="KW-1015">Disulfide bond</keyword>
<keyword id="KW-0325">Glycoprotein</keyword>
<keyword id="KW-1038">Host endoplasmic reticulum</keyword>
<keyword id="KW-1040">Host Golgi apparatus</keyword>
<keyword id="KW-1043">Host membrane</keyword>
<keyword id="KW-0945">Host-virus interaction</keyword>
<keyword id="KW-1090">Inhibition of host innate immune response by virus</keyword>
<keyword id="KW-1225">Inhibition of host TLR pathway by virus</keyword>
<keyword id="KW-0426">Late protein</keyword>
<keyword id="KW-0433">Leucine-rich repeat</keyword>
<keyword id="KW-0472">Membrane</keyword>
<keyword id="KW-0732">Signal</keyword>
<keyword id="KW-0812">Transmembrane</keyword>
<keyword id="KW-1133">Transmembrane helix</keyword>
<keyword id="KW-0899">Viral immunoevasion</keyword>
<gene>
    <name type="ordered locus">War-152</name>
</gene>
<sequence>MLRVFIFFVFLGSGLTGRIKPQITCKYFISENNTWYKYNVTILNSTIVLPAYNTIPSNAAGISCTCHDIDYLQKNNISIHYNTSILKTFQDIRIIRCGMKNISEIAGGFGKELKFLDLRYNDLQVIEYNILRKLIRSNTPTYLYYNNLMCGKRNCPLYYFLLKQEQTYLKLLPQFFLRRINFSNNNTYLYHFLSCGNKPGHEFLEYQTKYCRTKFPEINITVNQLTAKKNTERYKSCYPLVFISILCSCISFLFLFICLLRSICKKYSCTKQGKSGHNSGHNYIPLIPSYTFSLKKHRHPETAVVEDHTTSANSPIVYIPTTEEKKVSCSRRK</sequence>
<reference key="1">
    <citation type="submission" date="2003-03" db="EMBL/GenBank/DDBJ databases">
        <title>African swine fever virus genomes.</title>
        <authorList>
            <person name="Kutish G.F."/>
            <person name="Rock D.L."/>
        </authorList>
    </citation>
    <scope>NUCLEOTIDE SEQUENCE [LARGE SCALE GENOMIC DNA]</scope>
</reference>
<feature type="signal peptide" evidence="2">
    <location>
        <begin position="1"/>
        <end position="31"/>
    </location>
</feature>
<feature type="chain" id="PRO_0000373652" description="Transmembrane protein I329L">
    <location>
        <begin position="32"/>
        <end position="333"/>
    </location>
</feature>
<feature type="topological domain" description="Extracellular" evidence="2">
    <location>
        <begin position="32"/>
        <end position="239"/>
    </location>
</feature>
<feature type="transmembrane region" description="Helical" evidence="2">
    <location>
        <begin position="240"/>
        <end position="260"/>
    </location>
</feature>
<feature type="topological domain" description="Cytoplasmic">
    <location>
        <begin position="261"/>
        <end position="333"/>
    </location>
</feature>
<feature type="repeat" description="LRR" evidence="1">
    <location>
        <begin position="112"/>
        <end position="133"/>
    </location>
</feature>
<feature type="glycosylation site" description="N-linked (GlcNAc...) asparagine; by host" evidence="2">
    <location>
        <position position="32"/>
    </location>
</feature>
<feature type="glycosylation site" description="N-linked (GlcNAc...) asparagine; by host" evidence="2">
    <location>
        <position position="39"/>
    </location>
</feature>
<feature type="glycosylation site" description="N-linked (GlcNAc...) asparagine; by host" evidence="2">
    <location>
        <position position="44"/>
    </location>
</feature>
<feature type="glycosylation site" description="N-linked (GlcNAc...) asparagine; by host" evidence="2">
    <location>
        <position position="76"/>
    </location>
</feature>
<feature type="glycosylation site" description="N-linked (GlcNAc...) asparagine; by host" evidence="2">
    <location>
        <position position="82"/>
    </location>
</feature>
<feature type="glycosylation site" description="N-linked (GlcNAc...) asparagine; by host" evidence="2">
    <location>
        <position position="101"/>
    </location>
</feature>
<feature type="glycosylation site" description="N-linked (GlcNAc...) asparagine; by host" evidence="2">
    <location>
        <position position="181"/>
    </location>
</feature>
<feature type="glycosylation site" description="N-linked (GlcNAc...) asparagine; by host" evidence="2">
    <location>
        <position position="185"/>
    </location>
</feature>
<feature type="glycosylation site" description="N-linked (GlcNAc...) asparagine; by host" evidence="2">
    <location>
        <position position="219"/>
    </location>
</feature>
<feature type="disulfide bond" evidence="1">
    <location>
        <begin position="195"/>
        <end position="237"/>
    </location>
</feature>
<organism>
    <name type="scientific">African swine fever virus (isolate Warthog/Namibia/Wart80/1980)</name>
    <name type="common">ASFV</name>
    <dbReference type="NCBI Taxonomy" id="561444"/>
    <lineage>
        <taxon>Viruses</taxon>
        <taxon>Varidnaviria</taxon>
        <taxon>Bamfordvirae</taxon>
        <taxon>Nucleocytoviricota</taxon>
        <taxon>Pokkesviricetes</taxon>
        <taxon>Asfuvirales</taxon>
        <taxon>Asfarviridae</taxon>
        <taxon>Asfivirus</taxon>
        <taxon>African swine fever virus</taxon>
    </lineage>
</organism>
<comment type="function">
    <text evidence="1">Viral TLR3 homolog that probably prevents TLR3 dimerization and subsequent induction of IFN (By similarity). Inhibits dsRNA-stimulated activation of NF-kB and IRF3 (By similarity).</text>
</comment>
<comment type="subcellular location">
    <subcellularLocation>
        <location evidence="1">Host endoplasmic reticulum membrane</location>
        <topology evidence="3">Single-pass type I membrane protein</topology>
    </subcellularLocation>
    <subcellularLocation>
        <location>Host Golgi apparatus membrane</location>
        <topology evidence="3">Single-pass type I membrane protein</topology>
    </subcellularLocation>
</comment>
<comment type="induction">
    <text evidence="3">Expressed in the late phase of the viral replicative cycle.</text>
</comment>
<comment type="domain">
    <text evidence="1">Contains putative leucine-rich repeats (LRR) and a C-terminus cysteine-rich capping motif similar to domain structure of host TLR3.</text>
</comment>
<comment type="PTM">
    <text evidence="1">Highly glycosylated.</text>
</comment>
<comment type="similarity">
    <text evidence="3">Belongs to the asfivirus I329L family.</text>
</comment>
<dbReference type="EMBL" id="AY261366">
    <property type="status" value="NOT_ANNOTATED_CDS"/>
    <property type="molecule type" value="Genomic_DNA"/>
</dbReference>
<dbReference type="Proteomes" id="UP000000858">
    <property type="component" value="Segment"/>
</dbReference>
<dbReference type="GO" id="GO:0044167">
    <property type="term" value="C:host cell endoplasmic reticulum membrane"/>
    <property type="evidence" value="ECO:0007669"/>
    <property type="project" value="UniProtKB-SubCell"/>
</dbReference>
<dbReference type="GO" id="GO:0044178">
    <property type="term" value="C:host cell Golgi membrane"/>
    <property type="evidence" value="ECO:0007669"/>
    <property type="project" value="UniProtKB-SubCell"/>
</dbReference>
<dbReference type="GO" id="GO:0016020">
    <property type="term" value="C:membrane"/>
    <property type="evidence" value="ECO:0007669"/>
    <property type="project" value="UniProtKB-KW"/>
</dbReference>
<dbReference type="GO" id="GO:0052170">
    <property type="term" value="P:symbiont-mediated suppression of host innate immune response"/>
    <property type="evidence" value="ECO:0007669"/>
    <property type="project" value="UniProtKB-KW"/>
</dbReference>
<dbReference type="GO" id="GO:0039722">
    <property type="term" value="P:symbiont-mediated suppression of host toll-like receptor signaling pathway"/>
    <property type="evidence" value="ECO:0007669"/>
    <property type="project" value="UniProtKB-KW"/>
</dbReference>
<dbReference type="Gene3D" id="3.80.10.10">
    <property type="entry name" value="Ribonuclease Inhibitor"/>
    <property type="match status" value="1"/>
</dbReference>
<dbReference type="InterPro" id="IPR032675">
    <property type="entry name" value="LRR_dom_sf"/>
</dbReference>
<accession>P0CAE6</accession>
<name>I329L_ASFWA</name>
<protein>
    <recommendedName>
        <fullName>Transmembrane protein I329L</fullName>
    </recommendedName>
</protein>
<proteinExistence type="inferred from homology"/>